<protein>
    <recommendedName>
        <fullName evidence="1">Nickel import system ATP-binding protein NikE</fullName>
        <ecNumber evidence="1">7.2.2.11</ecNumber>
    </recommendedName>
</protein>
<reference key="1">
    <citation type="journal article" date="2001" name="Lancet">
        <title>Whole genome sequencing of meticillin-resistant Staphylococcus aureus.</title>
        <authorList>
            <person name="Kuroda M."/>
            <person name="Ohta T."/>
            <person name="Uchiyama I."/>
            <person name="Baba T."/>
            <person name="Yuzawa H."/>
            <person name="Kobayashi I."/>
            <person name="Cui L."/>
            <person name="Oguchi A."/>
            <person name="Aoki K."/>
            <person name="Nagai Y."/>
            <person name="Lian J.-Q."/>
            <person name="Ito T."/>
            <person name="Kanamori M."/>
            <person name="Matsumaru H."/>
            <person name="Maruyama A."/>
            <person name="Murakami H."/>
            <person name="Hosoyama A."/>
            <person name="Mizutani-Ui Y."/>
            <person name="Takahashi N.K."/>
            <person name="Sawano T."/>
            <person name="Inoue R."/>
            <person name="Kaito C."/>
            <person name="Sekimizu K."/>
            <person name="Hirakawa H."/>
            <person name="Kuhara S."/>
            <person name="Goto S."/>
            <person name="Yabuzaki J."/>
            <person name="Kanehisa M."/>
            <person name="Yamashita A."/>
            <person name="Oshima K."/>
            <person name="Furuya K."/>
            <person name="Yoshino C."/>
            <person name="Shiba T."/>
            <person name="Hattori M."/>
            <person name="Ogasawara N."/>
            <person name="Hayashi H."/>
            <person name="Hiramatsu K."/>
        </authorList>
    </citation>
    <scope>NUCLEOTIDE SEQUENCE [LARGE SCALE GENOMIC DNA]</scope>
    <source>
        <strain>N315</strain>
    </source>
</reference>
<evidence type="ECO:0000250" key="1">
    <source>
        <dbReference type="UniProtKB" id="Q2FYQ8"/>
    </source>
</evidence>
<evidence type="ECO:0000255" key="2">
    <source>
        <dbReference type="PROSITE-ProRule" id="PRU00434"/>
    </source>
</evidence>
<evidence type="ECO:0000305" key="3"/>
<comment type="function">
    <text evidence="1">Part of the ABC transporter complex NikABCDE (Opp2) involved in nickel import. Probably responsible for energy coupling to the transport system.</text>
</comment>
<comment type="catalytic activity">
    <reaction evidence="1">
        <text>Ni(2+)(out) + ATP + H2O = Ni(2+)(in) + ADP + phosphate + H(+)</text>
        <dbReference type="Rhea" id="RHEA:15557"/>
        <dbReference type="ChEBI" id="CHEBI:15377"/>
        <dbReference type="ChEBI" id="CHEBI:15378"/>
        <dbReference type="ChEBI" id="CHEBI:30616"/>
        <dbReference type="ChEBI" id="CHEBI:43474"/>
        <dbReference type="ChEBI" id="CHEBI:49786"/>
        <dbReference type="ChEBI" id="CHEBI:456216"/>
        <dbReference type="EC" id="7.2.2.11"/>
    </reaction>
    <physiologicalReaction direction="left-to-right" evidence="1">
        <dbReference type="Rhea" id="RHEA:15558"/>
    </physiologicalReaction>
</comment>
<comment type="subunit">
    <text evidence="1">The complex is composed of two ATP-binding proteins (NikD and NikE), two transmembrane proteins (NikB and NikC) and a solute-binding protein (NikA).</text>
</comment>
<comment type="subcellular location">
    <subcellularLocation>
        <location evidence="3">Cell membrane</location>
        <topology evidence="3">Peripheral membrane protein</topology>
    </subcellularLocation>
</comment>
<comment type="similarity">
    <text evidence="3">Belongs to the ABC transporter superfamily.</text>
</comment>
<proteinExistence type="inferred from homology"/>
<accession>Q7A5Q9</accession>
<organism>
    <name type="scientific">Staphylococcus aureus (strain N315)</name>
    <dbReference type="NCBI Taxonomy" id="158879"/>
    <lineage>
        <taxon>Bacteria</taxon>
        <taxon>Bacillati</taxon>
        <taxon>Bacillota</taxon>
        <taxon>Bacilli</taxon>
        <taxon>Bacillales</taxon>
        <taxon>Staphylococcaceae</taxon>
        <taxon>Staphylococcus</taxon>
    </lineage>
</organism>
<name>NIKE_STAAN</name>
<gene>
    <name evidence="1" type="primary">nikE</name>
    <name type="synonym">oppF2</name>
    <name type="ordered locus">SA1211</name>
</gene>
<keyword id="KW-0067">ATP-binding</keyword>
<keyword id="KW-1003">Cell membrane</keyword>
<keyword id="KW-0406">Ion transport</keyword>
<keyword id="KW-0472">Membrane</keyword>
<keyword id="KW-0533">Nickel</keyword>
<keyword id="KW-0921">Nickel transport</keyword>
<keyword id="KW-0547">Nucleotide-binding</keyword>
<keyword id="KW-1278">Translocase</keyword>
<keyword id="KW-0813">Transport</keyword>
<sequence length="233" mass="26291">MIELKHVTFGYNKKQMVLQDINITIPDGENVGILGESGCGKSTLASLVLGLFKPVKGEIYLSDNAVLTIFQHPLTSFNPDWTIETSLKEALYYYRGLTDNTAQDQLLLQHLSTFELNAQLLTKLPSEVSGGQLQRFNVMRSLLAQPRVLICDEITSNLDVIAEQNVINILKAQTITNLNHFIVISHDLSVLQRLVNRIIVLKDGMIVDDFAIEELFNVDRHPYTKELVQTFSY</sequence>
<dbReference type="EC" id="7.2.2.11" evidence="1"/>
<dbReference type="EMBL" id="BA000018">
    <property type="protein sequence ID" value="BAB42471.1"/>
    <property type="molecule type" value="Genomic_DNA"/>
</dbReference>
<dbReference type="PIR" id="C89914">
    <property type="entry name" value="C89914"/>
</dbReference>
<dbReference type="RefSeq" id="WP_000571259.1">
    <property type="nucleotide sequence ID" value="NC_002745.2"/>
</dbReference>
<dbReference type="SMR" id="Q7A5Q9"/>
<dbReference type="EnsemblBacteria" id="BAB42471">
    <property type="protein sequence ID" value="BAB42471"/>
    <property type="gene ID" value="BAB42471"/>
</dbReference>
<dbReference type="KEGG" id="sau:SA1211"/>
<dbReference type="HOGENOM" id="CLU_000604_1_23_9"/>
<dbReference type="GO" id="GO:0005886">
    <property type="term" value="C:plasma membrane"/>
    <property type="evidence" value="ECO:0007669"/>
    <property type="project" value="UniProtKB-SubCell"/>
</dbReference>
<dbReference type="GO" id="GO:0015413">
    <property type="term" value="F:ABC-type nickel transporter activity"/>
    <property type="evidence" value="ECO:0007669"/>
    <property type="project" value="UniProtKB-EC"/>
</dbReference>
<dbReference type="GO" id="GO:0005524">
    <property type="term" value="F:ATP binding"/>
    <property type="evidence" value="ECO:0007669"/>
    <property type="project" value="UniProtKB-KW"/>
</dbReference>
<dbReference type="GO" id="GO:0016887">
    <property type="term" value="F:ATP hydrolysis activity"/>
    <property type="evidence" value="ECO:0007669"/>
    <property type="project" value="InterPro"/>
</dbReference>
<dbReference type="CDD" id="cd03257">
    <property type="entry name" value="ABC_NikE_OppD_transporters"/>
    <property type="match status" value="1"/>
</dbReference>
<dbReference type="FunFam" id="3.40.50.300:FF:001829">
    <property type="entry name" value="Nickel import system ATP-binding protein NikE"/>
    <property type="match status" value="1"/>
</dbReference>
<dbReference type="Gene3D" id="3.40.50.300">
    <property type="entry name" value="P-loop containing nucleotide triphosphate hydrolases"/>
    <property type="match status" value="1"/>
</dbReference>
<dbReference type="InterPro" id="IPR003593">
    <property type="entry name" value="AAA+_ATPase"/>
</dbReference>
<dbReference type="InterPro" id="IPR050319">
    <property type="entry name" value="ABC_transp_ATP-bind"/>
</dbReference>
<dbReference type="InterPro" id="IPR003439">
    <property type="entry name" value="ABC_transporter-like_ATP-bd"/>
</dbReference>
<dbReference type="InterPro" id="IPR027417">
    <property type="entry name" value="P-loop_NTPase"/>
</dbReference>
<dbReference type="PANTHER" id="PTHR43776:SF8">
    <property type="entry name" value="ABC TRANSPORTER, ATP-BINDING PROTEIN"/>
    <property type="match status" value="1"/>
</dbReference>
<dbReference type="PANTHER" id="PTHR43776">
    <property type="entry name" value="TRANSPORT ATP-BINDING PROTEIN"/>
    <property type="match status" value="1"/>
</dbReference>
<dbReference type="Pfam" id="PF00005">
    <property type="entry name" value="ABC_tran"/>
    <property type="match status" value="1"/>
</dbReference>
<dbReference type="SMART" id="SM00382">
    <property type="entry name" value="AAA"/>
    <property type="match status" value="1"/>
</dbReference>
<dbReference type="SUPFAM" id="SSF52540">
    <property type="entry name" value="P-loop containing nucleoside triphosphate hydrolases"/>
    <property type="match status" value="1"/>
</dbReference>
<dbReference type="PROSITE" id="PS50893">
    <property type="entry name" value="ABC_TRANSPORTER_2"/>
    <property type="match status" value="1"/>
</dbReference>
<feature type="chain" id="PRO_0000276807" description="Nickel import system ATP-binding protein NikE">
    <location>
        <begin position="1"/>
        <end position="233"/>
    </location>
</feature>
<feature type="domain" description="ABC transporter" evidence="2">
    <location>
        <begin position="2"/>
        <end position="228"/>
    </location>
</feature>
<feature type="binding site" evidence="2">
    <location>
        <begin position="35"/>
        <end position="42"/>
    </location>
    <ligand>
        <name>ATP</name>
        <dbReference type="ChEBI" id="CHEBI:30616"/>
    </ligand>
</feature>